<name>TX90A_PHOKE</name>
<evidence type="ECO:0000269" key="1">
    <source>
    </source>
</evidence>
<evidence type="ECO:0000269" key="2">
    <source ref="2"/>
</evidence>
<evidence type="ECO:0000305" key="3"/>
<feature type="chain" id="PRO_0000087633" description="U8-ctenitoxin-Pk1a">
    <location>
        <begin position="1"/>
        <end position="58"/>
    </location>
</feature>
<feature type="disulfide bond" evidence="3">
    <location>
        <begin position="2"/>
        <end position="16"/>
    </location>
</feature>
<feature type="disulfide bond" evidence="3">
    <location>
        <begin position="9"/>
        <end position="22"/>
    </location>
</feature>
<feature type="disulfide bond" evidence="3">
    <location>
        <begin position="15"/>
        <end position="40"/>
    </location>
</feature>
<feature type="disulfide bond" evidence="3">
    <location>
        <begin position="24"/>
        <end position="38"/>
    </location>
</feature>
<feature type="disulfide bond" evidence="3">
    <location>
        <begin position="48"/>
        <end position="55"/>
    </location>
</feature>
<keyword id="KW-0903">Direct protein sequencing</keyword>
<keyword id="KW-1015">Disulfide bond</keyword>
<keyword id="KW-0872">Ion channel impairing toxin</keyword>
<keyword id="KW-0960">Knottin</keyword>
<keyword id="KW-0528">Neurotoxin</keyword>
<keyword id="KW-0964">Secreted</keyword>
<keyword id="KW-0800">Toxin</keyword>
<protein>
    <recommendedName>
        <fullName>U8-ctenitoxin-Pk1a</fullName>
        <shortName>U8-CNTX-Pk1a</shortName>
    </recommendedName>
    <alternativeName>
        <fullName>Probable neurotoxin PKTx23C3</fullName>
    </alternativeName>
</protein>
<proteinExistence type="evidence at protein level"/>
<sequence length="58" mass="6602">ACLARGETCKDDCECCDCDNQCYCPFDWFGGKWHPVGCSCAHANKYFCDHKKEKCKKA</sequence>
<accession>P83902</accession>
<organism evidence="3">
    <name type="scientific">Phoneutria keyserlingi</name>
    <name type="common">Brazilian wandering spider</name>
    <name type="synonym">Ctenus keyserlingii</name>
    <dbReference type="NCBI Taxonomy" id="272754"/>
    <lineage>
        <taxon>Eukaryota</taxon>
        <taxon>Metazoa</taxon>
        <taxon>Ecdysozoa</taxon>
        <taxon>Arthropoda</taxon>
        <taxon>Chelicerata</taxon>
        <taxon>Arachnida</taxon>
        <taxon>Araneae</taxon>
        <taxon>Araneomorphae</taxon>
        <taxon>Entelegynae</taxon>
        <taxon>Lycosoidea</taxon>
        <taxon>Ctenidae</taxon>
        <taxon>Phoneutria</taxon>
    </lineage>
</organism>
<reference key="1">
    <citation type="journal article" date="2006" name="Comp. Biochem. Physiol.">
        <title>Comparison of the partial proteomes of the venoms of Brazilian spiders of the genus Phoneutria.</title>
        <authorList>
            <person name="Richardson M."/>
            <person name="Pimenta A.M."/>
            <person name="Bemquerer M.P."/>
            <person name="Santoro M.M."/>
            <person name="Beirao P.S."/>
            <person name="Lima M.E."/>
            <person name="Figueiredo S.G."/>
            <person name="Bloch C. Jr."/>
            <person name="Vasconcelos E.A."/>
            <person name="Campos F.A."/>
            <person name="Gomes P.C."/>
            <person name="Cordeiro M.N."/>
        </authorList>
    </citation>
    <scope>PROTEIN SEQUENCE</scope>
    <scope>SUBCELLULAR LOCATION</scope>
    <scope>TISSUE SPECIFICITY</scope>
    <scope>MASS SPECTROMETRY</scope>
    <source>
        <tissue>Venom</tissue>
    </source>
</reference>
<reference evidence="3" key="2">
    <citation type="submission" date="2004-04" db="UniProtKB">
        <title>New neurotoxin PKTx23C3 from venom of Brazilian wandering spider Phoneutria keyserlingi.</title>
        <authorList>
            <person name="Richardson M."/>
            <person name="Pimenta A.M.C."/>
            <person name="Bemquerer M.P."/>
            <person name="Santoro M.M."/>
            <person name="Figueiredo S.G."/>
            <person name="Cordeiro M.N."/>
        </authorList>
    </citation>
    <scope>FUNCTION</scope>
</reference>
<comment type="function">
    <text evidence="2 3">No toxic effects on mice at dose levels of 5 ug per mouse. May be toxic to insects.</text>
</comment>
<comment type="subcellular location">
    <subcellularLocation>
        <location evidence="1 3">Secreted</location>
    </subcellularLocation>
</comment>
<comment type="tissue specificity">
    <text evidence="1 3">Expressed by the venom gland.</text>
</comment>
<comment type="domain">
    <text evidence="3">The presence of a 'disulfide through disulfide knot' structurally defines this protein as a knottin.</text>
</comment>
<comment type="mass spectrometry" mass="6592.6" method="Electrospray" evidence="1 3"/>
<comment type="similarity">
    <text evidence="3">Belongs to the neurotoxin 09 (Tx3-6) family.</text>
</comment>
<dbReference type="SMR" id="P83902"/>
<dbReference type="ArachnoServer" id="AS000238">
    <property type="toxin name" value="U8-ctenitoxin-Pk1a"/>
</dbReference>
<dbReference type="GO" id="GO:0005576">
    <property type="term" value="C:extracellular region"/>
    <property type="evidence" value="ECO:0007669"/>
    <property type="project" value="UniProtKB-SubCell"/>
</dbReference>
<dbReference type="GO" id="GO:0099106">
    <property type="term" value="F:ion channel regulator activity"/>
    <property type="evidence" value="ECO:0007669"/>
    <property type="project" value="UniProtKB-KW"/>
</dbReference>
<dbReference type="GO" id="GO:0090729">
    <property type="term" value="F:toxin activity"/>
    <property type="evidence" value="ECO:0007669"/>
    <property type="project" value="UniProtKB-KW"/>
</dbReference>